<reference key="1">
    <citation type="journal article" date="1997" name="Nature">
        <title>The nucleotide sequence of Saccharomyces cerevisiae chromosome IV.</title>
        <authorList>
            <person name="Jacq C."/>
            <person name="Alt-Moerbe J."/>
            <person name="Andre B."/>
            <person name="Arnold W."/>
            <person name="Bahr A."/>
            <person name="Ballesta J.P.G."/>
            <person name="Bargues M."/>
            <person name="Baron L."/>
            <person name="Becker A."/>
            <person name="Biteau N."/>
            <person name="Bloecker H."/>
            <person name="Blugeon C."/>
            <person name="Boskovic J."/>
            <person name="Brandt P."/>
            <person name="Brueckner M."/>
            <person name="Buitrago M.J."/>
            <person name="Coster F."/>
            <person name="Delaveau T."/>
            <person name="del Rey F."/>
            <person name="Dujon B."/>
            <person name="Eide L.G."/>
            <person name="Garcia-Cantalejo J.M."/>
            <person name="Goffeau A."/>
            <person name="Gomez-Peris A."/>
            <person name="Granotier C."/>
            <person name="Hanemann V."/>
            <person name="Hankeln T."/>
            <person name="Hoheisel J.D."/>
            <person name="Jaeger W."/>
            <person name="Jimenez A."/>
            <person name="Jonniaux J.-L."/>
            <person name="Kraemer C."/>
            <person name="Kuester H."/>
            <person name="Laamanen P."/>
            <person name="Legros Y."/>
            <person name="Louis E.J."/>
            <person name="Moeller-Rieker S."/>
            <person name="Monnet A."/>
            <person name="Moro M."/>
            <person name="Mueller-Auer S."/>
            <person name="Nussbaumer B."/>
            <person name="Paricio N."/>
            <person name="Paulin L."/>
            <person name="Perea J."/>
            <person name="Perez-Alonso M."/>
            <person name="Perez-Ortin J.E."/>
            <person name="Pohl T.M."/>
            <person name="Prydz H."/>
            <person name="Purnelle B."/>
            <person name="Rasmussen S.W."/>
            <person name="Remacha M.A."/>
            <person name="Revuelta J.L."/>
            <person name="Rieger M."/>
            <person name="Salom D."/>
            <person name="Saluz H.P."/>
            <person name="Saiz J.E."/>
            <person name="Saren A.-M."/>
            <person name="Schaefer M."/>
            <person name="Scharfe M."/>
            <person name="Schmidt E.R."/>
            <person name="Schneider C."/>
            <person name="Scholler P."/>
            <person name="Schwarz S."/>
            <person name="Soler-Mira A."/>
            <person name="Urrestarazu L.A."/>
            <person name="Verhasselt P."/>
            <person name="Vissers S."/>
            <person name="Voet M."/>
            <person name="Volckaert G."/>
            <person name="Wagner G."/>
            <person name="Wambutt R."/>
            <person name="Wedler E."/>
            <person name="Wedler H."/>
            <person name="Woelfl S."/>
            <person name="Harris D.E."/>
            <person name="Bowman S."/>
            <person name="Brown D."/>
            <person name="Churcher C.M."/>
            <person name="Connor R."/>
            <person name="Dedman K."/>
            <person name="Gentles S."/>
            <person name="Hamlin N."/>
            <person name="Hunt S."/>
            <person name="Jones L."/>
            <person name="McDonald S."/>
            <person name="Murphy L.D."/>
            <person name="Niblett D."/>
            <person name="Odell C."/>
            <person name="Oliver K."/>
            <person name="Rajandream M.A."/>
            <person name="Richards C."/>
            <person name="Shore L."/>
            <person name="Walsh S.V."/>
            <person name="Barrell B.G."/>
            <person name="Dietrich F.S."/>
            <person name="Mulligan J.T."/>
            <person name="Allen E."/>
            <person name="Araujo R."/>
            <person name="Aviles E."/>
            <person name="Berno A."/>
            <person name="Carpenter J."/>
            <person name="Chen E."/>
            <person name="Cherry J.M."/>
            <person name="Chung E."/>
            <person name="Duncan M."/>
            <person name="Hunicke-Smith S."/>
            <person name="Hyman R.W."/>
            <person name="Komp C."/>
            <person name="Lashkari D."/>
            <person name="Lew H."/>
            <person name="Lin D."/>
            <person name="Mosedale D."/>
            <person name="Nakahara K."/>
            <person name="Namath A."/>
            <person name="Oefner P."/>
            <person name="Oh C."/>
            <person name="Petel F.X."/>
            <person name="Roberts D."/>
            <person name="Schramm S."/>
            <person name="Schroeder M."/>
            <person name="Shogren T."/>
            <person name="Shroff N."/>
            <person name="Winant A."/>
            <person name="Yelton M.A."/>
            <person name="Botstein D."/>
            <person name="Davis R.W."/>
            <person name="Johnston M."/>
            <person name="Andrews S."/>
            <person name="Brinkman R."/>
            <person name="Cooper J."/>
            <person name="Ding H."/>
            <person name="Du Z."/>
            <person name="Favello A."/>
            <person name="Fulton L."/>
            <person name="Gattung S."/>
            <person name="Greco T."/>
            <person name="Hallsworth K."/>
            <person name="Hawkins J."/>
            <person name="Hillier L.W."/>
            <person name="Jier M."/>
            <person name="Johnson D."/>
            <person name="Johnston L."/>
            <person name="Kirsten J."/>
            <person name="Kucaba T."/>
            <person name="Langston Y."/>
            <person name="Latreille P."/>
            <person name="Le T."/>
            <person name="Mardis E."/>
            <person name="Menezes S."/>
            <person name="Miller N."/>
            <person name="Nhan M."/>
            <person name="Pauley A."/>
            <person name="Peluso D."/>
            <person name="Rifkin L."/>
            <person name="Riles L."/>
            <person name="Taich A."/>
            <person name="Trevaskis E."/>
            <person name="Vignati D."/>
            <person name="Wilcox L."/>
            <person name="Wohldman P."/>
            <person name="Vaudin M."/>
            <person name="Wilson R."/>
            <person name="Waterston R."/>
            <person name="Albermann K."/>
            <person name="Hani J."/>
            <person name="Heumann K."/>
            <person name="Kleine K."/>
            <person name="Mewes H.-W."/>
            <person name="Zollner A."/>
            <person name="Zaccaria P."/>
        </authorList>
    </citation>
    <scope>NUCLEOTIDE SEQUENCE [LARGE SCALE GENOMIC DNA]</scope>
    <source>
        <strain>ATCC 204508 / S288c</strain>
    </source>
</reference>
<reference key="2">
    <citation type="journal article" date="2014" name="G3 (Bethesda)">
        <title>The reference genome sequence of Saccharomyces cerevisiae: Then and now.</title>
        <authorList>
            <person name="Engel S.R."/>
            <person name="Dietrich F.S."/>
            <person name="Fisk D.G."/>
            <person name="Binkley G."/>
            <person name="Balakrishnan R."/>
            <person name="Costanzo M.C."/>
            <person name="Dwight S.S."/>
            <person name="Hitz B.C."/>
            <person name="Karra K."/>
            <person name="Nash R.S."/>
            <person name="Weng S."/>
            <person name="Wong E.D."/>
            <person name="Lloyd P."/>
            <person name="Skrzypek M.S."/>
            <person name="Miyasato S.R."/>
            <person name="Simison M."/>
            <person name="Cherry J.M."/>
        </authorList>
    </citation>
    <scope>GENOME REANNOTATION</scope>
    <source>
        <strain>ATCC 204508 / S288c</strain>
    </source>
</reference>
<reference key="3">
    <citation type="journal article" date="2002" name="Mol. Cell. Biol.">
        <title>The Sur7p family defines novel cortical domains in Saccharomyces cerevisiae, affects sphingolipid metabolism, and is involved in sporulation.</title>
        <authorList>
            <person name="Young M.E."/>
            <person name="Karpova T.S."/>
            <person name="Bruegger B."/>
            <person name="Moschenross D.M."/>
            <person name="Wang G.K."/>
            <person name="Schneiter R."/>
            <person name="Wieland F.T."/>
            <person name="Cooper J.A."/>
        </authorList>
    </citation>
    <scope>FUNCTION</scope>
    <scope>SUBCELLULAR LOCATION</scope>
</reference>
<reference key="4">
    <citation type="journal article" date="2003" name="Nature">
        <title>Global analysis of protein localization in budding yeast.</title>
        <authorList>
            <person name="Huh W.-K."/>
            <person name="Falvo J.V."/>
            <person name="Gerke L.C."/>
            <person name="Carroll A.S."/>
            <person name="Howson R.W."/>
            <person name="Weissman J.S."/>
            <person name="O'Shea E.K."/>
        </authorList>
    </citation>
    <scope>SUBCELLULAR LOCATION [LARGE SCALE ANALYSIS]</scope>
</reference>
<reference key="5">
    <citation type="journal article" date="2003" name="Nature">
        <title>Global analysis of protein expression in yeast.</title>
        <authorList>
            <person name="Ghaemmaghami S."/>
            <person name="Huh W.-K."/>
            <person name="Bower K."/>
            <person name="Howson R.W."/>
            <person name="Belle A."/>
            <person name="Dephoure N."/>
            <person name="O'Shea E.K."/>
            <person name="Weissman J.S."/>
        </authorList>
    </citation>
    <scope>LEVEL OF PROTEIN EXPRESSION [LARGE SCALE ANALYSIS]</scope>
</reference>
<reference key="6">
    <citation type="journal article" date="2003" name="Yeast">
        <title>A genetic screen for yeast genes induced by sustained osmotic stress.</title>
        <authorList>
            <person name="Runner V.M."/>
            <person name="Brewster J.L."/>
        </authorList>
    </citation>
    <scope>INDUCTION</scope>
</reference>
<reference key="7">
    <citation type="journal article" date="2007" name="Curr. Microbiol.">
        <title>Genetic and comparative transcriptome analysis of bromodomain factor 1 in the salt stress response of Saccharomyces cerevisiae.</title>
        <authorList>
            <person name="Liu X."/>
            <person name="Zhang X."/>
            <person name="Wang C."/>
            <person name="Liu L."/>
            <person name="Lei M."/>
            <person name="Bao X."/>
        </authorList>
    </citation>
    <scope>INDUCTION</scope>
</reference>
<reference key="8">
    <citation type="journal article" date="2007" name="J. Mol. Biol.">
        <title>Characteristics affecting expression and solubilization of yeast membrane proteins.</title>
        <authorList>
            <person name="White M.A."/>
            <person name="Clark K.M."/>
            <person name="Grayhack E.J."/>
            <person name="Dumont M.E."/>
        </authorList>
    </citation>
    <scope>SUBCELLULAR LOCATION</scope>
</reference>
<reference key="9">
    <citation type="journal article" date="2009" name="Science">
        <title>Global analysis of Cdk1 substrate phosphorylation sites provides insights into evolution.</title>
        <authorList>
            <person name="Holt L.J."/>
            <person name="Tuch B.B."/>
            <person name="Villen J."/>
            <person name="Johnson A.D."/>
            <person name="Gygi S.P."/>
            <person name="Morgan D.O."/>
        </authorList>
    </citation>
    <scope>PHOSPHORYLATION [LARGE SCALE ANALYSIS] AT SER-230; SER-232 AND THR-235</scope>
    <scope>IDENTIFICATION BY MASS SPECTROMETRY [LARGE SCALE ANALYSIS]</scope>
</reference>
<protein>
    <recommendedName>
        <fullName>SUR7 family protein FMP45</fullName>
    </recommendedName>
</protein>
<gene>
    <name type="primary">FMP45</name>
    <name type="ordered locus">YDL222C</name>
</gene>
<comment type="function">
    <text evidence="3">Involved in sporulation and affects the sphingolipid composition of the plasma membrane.</text>
</comment>
<comment type="interaction">
    <interactant intactId="EBI-2051056">
        <id>Q07651</id>
    </interactant>
    <interactant intactId="EBI-8778">
        <id>P38695</id>
        <label>HXT5</label>
    </interactant>
    <organismsDiffer>false</organismsDiffer>
    <experiments>3</experiments>
</comment>
<comment type="subcellular location">
    <subcellularLocation>
        <location evidence="3 5 7">Cell membrane</location>
        <topology evidence="3 5 7">Multi-pass membrane protein</topology>
    </subcellularLocation>
    <text>Concentrates within cortical patches at the membrane.</text>
</comment>
<comment type="induction">
    <text evidence="4 8">By osmotic and salt stresses.</text>
</comment>
<comment type="miscellaneous">
    <text evidence="6">Present with 329 molecules/cell in log phase SD medium.</text>
</comment>
<comment type="similarity">
    <text evidence="9">Belongs to the SUR7 family.</text>
</comment>
<name>FMP45_YEAST</name>
<evidence type="ECO:0000255" key="1"/>
<evidence type="ECO:0000256" key="2">
    <source>
        <dbReference type="SAM" id="MobiDB-lite"/>
    </source>
</evidence>
<evidence type="ECO:0000269" key="3">
    <source>
    </source>
</evidence>
<evidence type="ECO:0000269" key="4">
    <source>
    </source>
</evidence>
<evidence type="ECO:0000269" key="5">
    <source>
    </source>
</evidence>
<evidence type="ECO:0000269" key="6">
    <source>
    </source>
</evidence>
<evidence type="ECO:0000269" key="7">
    <source>
    </source>
</evidence>
<evidence type="ECO:0000269" key="8">
    <source>
    </source>
</evidence>
<evidence type="ECO:0000305" key="9"/>
<evidence type="ECO:0007744" key="10">
    <source>
    </source>
</evidence>
<accession>Q07651</accession>
<accession>D6VRD3</accession>
<dbReference type="EMBL" id="Z74270">
    <property type="protein sequence ID" value="CAA98801.1"/>
    <property type="molecule type" value="Genomic_DNA"/>
</dbReference>
<dbReference type="EMBL" id="BK006938">
    <property type="protein sequence ID" value="DAA11643.1"/>
    <property type="molecule type" value="Genomic_DNA"/>
</dbReference>
<dbReference type="PIR" id="S67785">
    <property type="entry name" value="S67785"/>
</dbReference>
<dbReference type="RefSeq" id="NP_010059.1">
    <property type="nucleotide sequence ID" value="NM_001180282.1"/>
</dbReference>
<dbReference type="BioGRID" id="31824">
    <property type="interactions" value="132"/>
</dbReference>
<dbReference type="FunCoup" id="Q07651">
    <property type="interactions" value="125"/>
</dbReference>
<dbReference type="IntAct" id="Q07651">
    <property type="interactions" value="63"/>
</dbReference>
<dbReference type="MINT" id="Q07651"/>
<dbReference type="STRING" id="4932.YDL222C"/>
<dbReference type="GlyCosmos" id="Q07651">
    <property type="glycosylation" value="1 site, No reported glycans"/>
</dbReference>
<dbReference type="GlyGen" id="Q07651">
    <property type="glycosylation" value="1 site"/>
</dbReference>
<dbReference type="iPTMnet" id="Q07651"/>
<dbReference type="PaxDb" id="4932-YDL222C"/>
<dbReference type="PeptideAtlas" id="Q07651"/>
<dbReference type="EnsemblFungi" id="YDL222C_mRNA">
    <property type="protein sequence ID" value="YDL222C"/>
    <property type="gene ID" value="YDL222C"/>
</dbReference>
<dbReference type="GeneID" id="851304"/>
<dbReference type="KEGG" id="sce:YDL222C"/>
<dbReference type="AGR" id="SGD:S000002381"/>
<dbReference type="SGD" id="S000002381">
    <property type="gene designation" value="FMP45"/>
</dbReference>
<dbReference type="VEuPathDB" id="FungiDB:YDL222C"/>
<dbReference type="eggNOG" id="ENOG502RKFF">
    <property type="taxonomic scope" value="Eukaryota"/>
</dbReference>
<dbReference type="GeneTree" id="ENSGT00940000176556"/>
<dbReference type="HOGENOM" id="CLU_059603_0_0_1"/>
<dbReference type="InParanoid" id="Q07651"/>
<dbReference type="OMA" id="FMWTAVA"/>
<dbReference type="OrthoDB" id="5419460at2759"/>
<dbReference type="BioCyc" id="YEAST:G3O-29602-MONOMER"/>
<dbReference type="BioGRID-ORCS" id="851304">
    <property type="hits" value="1 hit in 10 CRISPR screens"/>
</dbReference>
<dbReference type="PRO" id="PR:Q07651"/>
<dbReference type="Proteomes" id="UP000002311">
    <property type="component" value="Chromosome IV"/>
</dbReference>
<dbReference type="RNAct" id="Q07651">
    <property type="molecule type" value="protein"/>
</dbReference>
<dbReference type="GO" id="GO:0005938">
    <property type="term" value="C:cell cortex"/>
    <property type="evidence" value="ECO:0000314"/>
    <property type="project" value="SGD"/>
</dbReference>
<dbReference type="GO" id="GO:0071944">
    <property type="term" value="C:cell periphery"/>
    <property type="evidence" value="ECO:0007005"/>
    <property type="project" value="SGD"/>
</dbReference>
<dbReference type="GO" id="GO:0045121">
    <property type="term" value="C:membrane raft"/>
    <property type="evidence" value="ECO:0000318"/>
    <property type="project" value="GO_Central"/>
</dbReference>
<dbReference type="GO" id="GO:0005739">
    <property type="term" value="C:mitochondrion"/>
    <property type="evidence" value="ECO:0007005"/>
    <property type="project" value="SGD"/>
</dbReference>
<dbReference type="GO" id="GO:0005886">
    <property type="term" value="C:plasma membrane"/>
    <property type="evidence" value="ECO:0007005"/>
    <property type="project" value="SGD"/>
</dbReference>
<dbReference type="GO" id="GO:0030437">
    <property type="term" value="P:ascospore formation"/>
    <property type="evidence" value="ECO:0000315"/>
    <property type="project" value="SGD"/>
</dbReference>
<dbReference type="GO" id="GO:0030866">
    <property type="term" value="P:cortical actin cytoskeleton organization"/>
    <property type="evidence" value="ECO:0000318"/>
    <property type="project" value="GO_Central"/>
</dbReference>
<dbReference type="GO" id="GO:0006897">
    <property type="term" value="P:endocytosis"/>
    <property type="evidence" value="ECO:0000318"/>
    <property type="project" value="GO_Central"/>
</dbReference>
<dbReference type="GO" id="GO:0031505">
    <property type="term" value="P:fungal-type cell wall organization"/>
    <property type="evidence" value="ECO:0000315"/>
    <property type="project" value="SGD"/>
</dbReference>
<dbReference type="GO" id="GO:0032185">
    <property type="term" value="P:septin cytoskeleton organization"/>
    <property type="evidence" value="ECO:0000318"/>
    <property type="project" value="GO_Central"/>
</dbReference>
<dbReference type="InterPro" id="IPR009571">
    <property type="entry name" value="SUR7/Rim9-like_fungi"/>
</dbReference>
<dbReference type="PANTHER" id="PTHR36414">
    <property type="entry name" value="PROTEIN SUR7"/>
    <property type="match status" value="1"/>
</dbReference>
<dbReference type="PANTHER" id="PTHR36414:SF3">
    <property type="entry name" value="SUR7 FAMILY PROTEIN FMP45"/>
    <property type="match status" value="1"/>
</dbReference>
<dbReference type="Pfam" id="PF06687">
    <property type="entry name" value="SUR7"/>
    <property type="match status" value="1"/>
</dbReference>
<keyword id="KW-1003">Cell membrane</keyword>
<keyword id="KW-0325">Glycoprotein</keyword>
<keyword id="KW-0472">Membrane</keyword>
<keyword id="KW-0597">Phosphoprotein</keyword>
<keyword id="KW-1185">Reference proteome</keyword>
<keyword id="KW-0749">Sporulation</keyword>
<keyword id="KW-0346">Stress response</keyword>
<keyword id="KW-0812">Transmembrane</keyword>
<keyword id="KW-1133">Transmembrane helix</keyword>
<proteinExistence type="evidence at protein level"/>
<sequence length="309" mass="34135">MIFKRFVNLLVFLFLLGAGLLTFFLILSGGRESGTLKNFYWLQADTNGFNSAPSTTRWYNYNWCGYEDGQLANCSSRAPAKPFSPRDNFGNSVNLPSSFRNNRDTYYYLSRVGWAMLLISLFFIVLALVPGFLATFLPFKAVPVLYCVLSWLAFFFIILAACLYTGCYVKARKTFRNSGRSARLGPKNFAFIWTSVFLMLVNAIWSTIFSATHKAHSTYSDHDMYAQYESPSVDTGAQMEKSTYNSGATDGAGPITAAPVVGQPQPTTTTTPAGNGKFFQKLKTRKQVPSAELEPAGDGGLAGPVTVRD</sequence>
<organism>
    <name type="scientific">Saccharomyces cerevisiae (strain ATCC 204508 / S288c)</name>
    <name type="common">Baker's yeast</name>
    <dbReference type="NCBI Taxonomy" id="559292"/>
    <lineage>
        <taxon>Eukaryota</taxon>
        <taxon>Fungi</taxon>
        <taxon>Dikarya</taxon>
        <taxon>Ascomycota</taxon>
        <taxon>Saccharomycotina</taxon>
        <taxon>Saccharomycetes</taxon>
        <taxon>Saccharomycetales</taxon>
        <taxon>Saccharomycetaceae</taxon>
        <taxon>Saccharomyces</taxon>
    </lineage>
</organism>
<feature type="chain" id="PRO_0000202591" description="SUR7 family protein FMP45">
    <location>
        <begin position="1"/>
        <end position="309"/>
    </location>
</feature>
<feature type="topological domain" description="Cytoplasmic" evidence="1">
    <location>
        <begin position="1"/>
        <end position="5"/>
    </location>
</feature>
<feature type="transmembrane region" description="Helical" evidence="1">
    <location>
        <begin position="6"/>
        <end position="26"/>
    </location>
</feature>
<feature type="topological domain" description="Extracellular" evidence="1">
    <location>
        <begin position="27"/>
        <end position="116"/>
    </location>
</feature>
<feature type="transmembrane region" description="Helical" evidence="1">
    <location>
        <begin position="117"/>
        <end position="137"/>
    </location>
</feature>
<feature type="topological domain" description="Cytoplasmic" evidence="1">
    <location>
        <begin position="138"/>
        <end position="140"/>
    </location>
</feature>
<feature type="transmembrane region" description="Helical" evidence="1">
    <location>
        <begin position="141"/>
        <end position="161"/>
    </location>
</feature>
<feature type="topological domain" description="Extracellular" evidence="1">
    <location>
        <begin position="162"/>
        <end position="188"/>
    </location>
</feature>
<feature type="transmembrane region" description="Helical" evidence="1">
    <location>
        <begin position="189"/>
        <end position="209"/>
    </location>
</feature>
<feature type="topological domain" description="Cytoplasmic" evidence="1">
    <location>
        <begin position="210"/>
        <end position="309"/>
    </location>
</feature>
<feature type="region of interest" description="Disordered" evidence="2">
    <location>
        <begin position="253"/>
        <end position="309"/>
    </location>
</feature>
<feature type="compositionally biased region" description="Low complexity" evidence="2">
    <location>
        <begin position="258"/>
        <end position="274"/>
    </location>
</feature>
<feature type="modified residue" description="Phosphoserine" evidence="10">
    <location>
        <position position="230"/>
    </location>
</feature>
<feature type="modified residue" description="Phosphoserine" evidence="10">
    <location>
        <position position="232"/>
    </location>
</feature>
<feature type="modified residue" description="Phosphothreonine" evidence="10">
    <location>
        <position position="235"/>
    </location>
</feature>
<feature type="glycosylation site" description="N-linked (GlcNAc...) asparagine" evidence="1">
    <location>
        <position position="73"/>
    </location>
</feature>